<keyword id="KW-0535">Nitrogen fixation</keyword>
<keyword id="KW-0560">Oxidoreductase</keyword>
<keyword id="KW-1185">Reference proteome</keyword>
<protein>
    <recommendedName>
        <fullName>Protein FixR</fullName>
    </recommendedName>
</protein>
<accession>P05406</accession>
<reference key="1">
    <citation type="journal article" date="1987" name="Nucleic Acids Res.">
        <title>The symbiotic nitrogen fixation regulatory operon (fixRnifA) of Bradyrhizobium japonicum is expressed aerobically and is subject to a novel, nifA-independent type of activation.</title>
        <authorList>
            <person name="Thoeny B."/>
            <person name="Fischer H.-M."/>
            <person name="Anthamatten D."/>
            <person name="Bruderer T."/>
            <person name="Hennecke H."/>
        </authorList>
    </citation>
    <scope>NUCLEOTIDE SEQUENCE [GENOMIC DNA]</scope>
</reference>
<reference key="2">
    <citation type="journal article" date="2001" name="J. Bacteriol.">
        <title>Potential symbiosis-specific genes uncovered by sequencing a 410-kb DNA region of the Bradyrhizobium japonicum chromosome.</title>
        <authorList>
            <person name="Goettfert M."/>
            <person name="Roethlisberger S."/>
            <person name="Kuendig C."/>
            <person name="Beck C."/>
            <person name="Marty R."/>
            <person name="Hennecke H."/>
        </authorList>
    </citation>
    <scope>NUCLEOTIDE SEQUENCE [GENOMIC DNA]</scope>
    <source>
        <strain>USDA 110spc4</strain>
    </source>
</reference>
<reference key="3">
    <citation type="journal article" date="2002" name="DNA Res.">
        <title>Complete genomic sequence of nitrogen-fixing symbiotic bacterium Bradyrhizobium japonicum USDA110.</title>
        <authorList>
            <person name="Kaneko T."/>
            <person name="Nakamura Y."/>
            <person name="Sato S."/>
            <person name="Minamisawa K."/>
            <person name="Uchiumi T."/>
            <person name="Sasamoto S."/>
            <person name="Watanabe A."/>
            <person name="Idesawa K."/>
            <person name="Iriguchi M."/>
            <person name="Kawashima K."/>
            <person name="Kohara M."/>
            <person name="Matsumoto M."/>
            <person name="Shimpo S."/>
            <person name="Tsuruoka H."/>
            <person name="Wada T."/>
            <person name="Yamada M."/>
            <person name="Tabata S."/>
        </authorList>
    </citation>
    <scope>NUCLEOTIDE SEQUENCE [LARGE SCALE GENOMIC DNA]</scope>
    <source>
        <strain>JCM 10833 / BCRC 13528 / IAM 13628 / NBRC 14792 / USDA 110</strain>
    </source>
</reference>
<name>FIXR_BRADU</name>
<gene>
    <name type="primary">fixR</name>
    <name type="ordered locus">blr2036</name>
</gene>
<dbReference type="EMBL" id="X06167">
    <property type="protein sequence ID" value="CAA29530.1"/>
    <property type="molecule type" value="Genomic_DNA"/>
</dbReference>
<dbReference type="EMBL" id="AH010242">
    <property type="protein sequence ID" value="AAG61007.1"/>
    <property type="molecule type" value="Genomic_DNA"/>
</dbReference>
<dbReference type="EMBL" id="BA000040">
    <property type="protein sequence ID" value="BAC47301.1"/>
    <property type="molecule type" value="Genomic_DNA"/>
</dbReference>
<dbReference type="PIR" id="S01065">
    <property type="entry name" value="S01065"/>
</dbReference>
<dbReference type="RefSeq" id="NP_768676.1">
    <property type="nucleotide sequence ID" value="NC_004463.1"/>
</dbReference>
<dbReference type="RefSeq" id="WP_011084833.1">
    <property type="nucleotide sequence ID" value="NZ_CP011360.1"/>
</dbReference>
<dbReference type="SMR" id="P05406"/>
<dbReference type="STRING" id="224911.AAV28_07020"/>
<dbReference type="EnsemblBacteria" id="BAC47301">
    <property type="protein sequence ID" value="BAC47301"/>
    <property type="gene ID" value="BAC47301"/>
</dbReference>
<dbReference type="KEGG" id="bja:blr2036"/>
<dbReference type="PATRIC" id="fig|224911.44.peg.1538"/>
<dbReference type="eggNOG" id="COG1028">
    <property type="taxonomic scope" value="Bacteria"/>
</dbReference>
<dbReference type="HOGENOM" id="CLU_010194_1_3_5"/>
<dbReference type="InParanoid" id="P05406"/>
<dbReference type="OrthoDB" id="9779623at2"/>
<dbReference type="PhylomeDB" id="P05406"/>
<dbReference type="Proteomes" id="UP000002526">
    <property type="component" value="Chromosome"/>
</dbReference>
<dbReference type="GO" id="GO:0016616">
    <property type="term" value="F:oxidoreductase activity, acting on the CH-OH group of donors, NAD or NADP as acceptor"/>
    <property type="evidence" value="ECO:0000318"/>
    <property type="project" value="GO_Central"/>
</dbReference>
<dbReference type="GO" id="GO:0009399">
    <property type="term" value="P:nitrogen fixation"/>
    <property type="evidence" value="ECO:0007669"/>
    <property type="project" value="UniProtKB-KW"/>
</dbReference>
<dbReference type="CDD" id="cd05233">
    <property type="entry name" value="SDR_c"/>
    <property type="match status" value="1"/>
</dbReference>
<dbReference type="FunFam" id="3.40.50.720:FF:000084">
    <property type="entry name" value="Short-chain dehydrogenase reductase"/>
    <property type="match status" value="1"/>
</dbReference>
<dbReference type="Gene3D" id="3.40.50.720">
    <property type="entry name" value="NAD(P)-binding Rossmann-like Domain"/>
    <property type="match status" value="1"/>
</dbReference>
<dbReference type="InterPro" id="IPR036291">
    <property type="entry name" value="NAD(P)-bd_dom_sf"/>
</dbReference>
<dbReference type="InterPro" id="IPR020904">
    <property type="entry name" value="Sc_DH/Rdtase_CS"/>
</dbReference>
<dbReference type="InterPro" id="IPR002347">
    <property type="entry name" value="SDR_fam"/>
</dbReference>
<dbReference type="PANTHER" id="PTHR42760:SF106">
    <property type="entry name" value="PROTEIN FIXR"/>
    <property type="match status" value="1"/>
</dbReference>
<dbReference type="PANTHER" id="PTHR42760">
    <property type="entry name" value="SHORT-CHAIN DEHYDROGENASES/REDUCTASES FAMILY MEMBER"/>
    <property type="match status" value="1"/>
</dbReference>
<dbReference type="Pfam" id="PF13561">
    <property type="entry name" value="adh_short_C2"/>
    <property type="match status" value="1"/>
</dbReference>
<dbReference type="PRINTS" id="PR00081">
    <property type="entry name" value="GDHRDH"/>
</dbReference>
<dbReference type="PRINTS" id="PR00080">
    <property type="entry name" value="SDRFAMILY"/>
</dbReference>
<dbReference type="SUPFAM" id="SSF51735">
    <property type="entry name" value="NAD(P)-binding Rossmann-fold domains"/>
    <property type="match status" value="1"/>
</dbReference>
<dbReference type="PROSITE" id="PS00061">
    <property type="entry name" value="ADH_SHORT"/>
    <property type="match status" value="1"/>
</dbReference>
<comment type="similarity">
    <text evidence="3">Belongs to the short-chain dehydrogenases/reductases (SDR) family.</text>
</comment>
<proteinExistence type="inferred from homology"/>
<evidence type="ECO:0000250" key="1"/>
<evidence type="ECO:0000255" key="2">
    <source>
        <dbReference type="PROSITE-ProRule" id="PRU10001"/>
    </source>
</evidence>
<evidence type="ECO:0000305" key="3"/>
<sequence>MGLDLPNDNLIRGPLPEAHLDRLVDAVNARVDRGEPKVMLLTGASRGIGHATAKLFSEAGWRIISCARQPFDGERCPWEAGNDDHFQVDLGDHRMLPRAITEVKKRLAGAPLHALVNNAGVSPKTPTGDRMTSLTTSTDTWMRVFHLNLVAPILLAQGLFDELRAASGSIVNVTSIAGSRVHPFAGSAYATSKAALASLTRELAHDYAPHGIRVNAIAPGEIRTDMLSPDAEARVVASIPLRRVGTPDEVAKVIFFLCSDAASYVTGAEVPINGGQHL</sequence>
<organism>
    <name type="scientific">Bradyrhizobium diazoefficiens (strain JCM 10833 / BCRC 13528 / IAM 13628 / NBRC 14792 / USDA 110)</name>
    <dbReference type="NCBI Taxonomy" id="224911"/>
    <lineage>
        <taxon>Bacteria</taxon>
        <taxon>Pseudomonadati</taxon>
        <taxon>Pseudomonadota</taxon>
        <taxon>Alphaproteobacteria</taxon>
        <taxon>Hyphomicrobiales</taxon>
        <taxon>Nitrobacteraceae</taxon>
        <taxon>Bradyrhizobium</taxon>
    </lineage>
</organism>
<feature type="chain" id="PRO_0000054697" description="Protein FixR">
    <location>
        <begin position="1"/>
        <end position="278"/>
    </location>
</feature>
<feature type="active site" description="Proton acceptor" evidence="2">
    <location>
        <position position="189"/>
    </location>
</feature>
<feature type="binding site" evidence="1">
    <location>
        <begin position="40"/>
        <end position="64"/>
    </location>
    <ligand>
        <name>NAD(+)</name>
        <dbReference type="ChEBI" id="CHEBI:57540"/>
    </ligand>
</feature>
<feature type="binding site" evidence="1">
    <location>
        <position position="175"/>
    </location>
    <ligand>
        <name>substrate</name>
    </ligand>
</feature>